<comment type="function">
    <text evidence="1">Converts the preformed base xanthine, a product of nucleic acid breakdown, to xanthosine 5'-monophosphate (XMP), so it can be reused for RNA or DNA synthesis.</text>
</comment>
<comment type="catalytic activity">
    <reaction evidence="1">
        <text>XMP + diphosphate = xanthine + 5-phospho-alpha-D-ribose 1-diphosphate</text>
        <dbReference type="Rhea" id="RHEA:10800"/>
        <dbReference type="ChEBI" id="CHEBI:17712"/>
        <dbReference type="ChEBI" id="CHEBI:33019"/>
        <dbReference type="ChEBI" id="CHEBI:57464"/>
        <dbReference type="ChEBI" id="CHEBI:58017"/>
        <dbReference type="EC" id="2.4.2.22"/>
    </reaction>
</comment>
<comment type="pathway">
    <text evidence="1">Purine metabolism; XMP biosynthesis via salvage pathway; XMP from xanthine: step 1/1.</text>
</comment>
<comment type="subunit">
    <text evidence="1">Homodimer.</text>
</comment>
<comment type="subcellular location">
    <subcellularLocation>
        <location evidence="1">Cytoplasm</location>
    </subcellularLocation>
</comment>
<comment type="similarity">
    <text evidence="1">Belongs to the purine/pyrimidine phosphoribosyltransferase family. Xpt subfamily.</text>
</comment>
<accession>Q81SQ5</accession>
<accession>Q6I0Y7</accession>
<accession>Q6KUU1</accession>
<name>XPT_BACAN</name>
<organism>
    <name type="scientific">Bacillus anthracis</name>
    <dbReference type="NCBI Taxonomy" id="1392"/>
    <lineage>
        <taxon>Bacteria</taxon>
        <taxon>Bacillati</taxon>
        <taxon>Bacillota</taxon>
        <taxon>Bacilli</taxon>
        <taxon>Bacillales</taxon>
        <taxon>Bacillaceae</taxon>
        <taxon>Bacillus</taxon>
        <taxon>Bacillus cereus group</taxon>
    </lineage>
</organism>
<keyword id="KW-0963">Cytoplasm</keyword>
<keyword id="KW-0328">Glycosyltransferase</keyword>
<keyword id="KW-0660">Purine salvage</keyword>
<keyword id="KW-1185">Reference proteome</keyword>
<keyword id="KW-0808">Transferase</keyword>
<dbReference type="EC" id="2.4.2.22" evidence="1"/>
<dbReference type="EMBL" id="AE016879">
    <property type="protein sequence ID" value="AAP25526.1"/>
    <property type="molecule type" value="Genomic_DNA"/>
</dbReference>
<dbReference type="EMBL" id="AE017334">
    <property type="protein sequence ID" value="AAT30690.1"/>
    <property type="molecule type" value="Genomic_DNA"/>
</dbReference>
<dbReference type="EMBL" id="AE017225">
    <property type="protein sequence ID" value="AAT53795.1"/>
    <property type="molecule type" value="Genomic_DNA"/>
</dbReference>
<dbReference type="RefSeq" id="NP_844040.1">
    <property type="nucleotide sequence ID" value="NC_003997.3"/>
</dbReference>
<dbReference type="RefSeq" id="WP_000866485.1">
    <property type="nucleotide sequence ID" value="NZ_WXXJ01000001.1"/>
</dbReference>
<dbReference type="RefSeq" id="YP_027744.1">
    <property type="nucleotide sequence ID" value="NC_005945.1"/>
</dbReference>
<dbReference type="SMR" id="Q81SQ5"/>
<dbReference type="STRING" id="261594.GBAA_1591"/>
<dbReference type="DNASU" id="1087311"/>
<dbReference type="KEGG" id="ban:BA_1591"/>
<dbReference type="KEGG" id="bar:GBAA_1591"/>
<dbReference type="KEGG" id="bat:BAS1475"/>
<dbReference type="PATRIC" id="fig|198094.11.peg.1560"/>
<dbReference type="eggNOG" id="COG0503">
    <property type="taxonomic scope" value="Bacteria"/>
</dbReference>
<dbReference type="HOGENOM" id="CLU_099015_0_0_9"/>
<dbReference type="OMA" id="DNFLNHQ"/>
<dbReference type="OrthoDB" id="9790678at2"/>
<dbReference type="UniPathway" id="UPA00602">
    <property type="reaction ID" value="UER00658"/>
</dbReference>
<dbReference type="Proteomes" id="UP000000427">
    <property type="component" value="Chromosome"/>
</dbReference>
<dbReference type="Proteomes" id="UP000000594">
    <property type="component" value="Chromosome"/>
</dbReference>
<dbReference type="GO" id="GO:0005737">
    <property type="term" value="C:cytoplasm"/>
    <property type="evidence" value="ECO:0007669"/>
    <property type="project" value="UniProtKB-SubCell"/>
</dbReference>
<dbReference type="GO" id="GO:0000310">
    <property type="term" value="F:xanthine phosphoribosyltransferase activity"/>
    <property type="evidence" value="ECO:0007669"/>
    <property type="project" value="UniProtKB-UniRule"/>
</dbReference>
<dbReference type="GO" id="GO:0006166">
    <property type="term" value="P:purine ribonucleoside salvage"/>
    <property type="evidence" value="ECO:0007669"/>
    <property type="project" value="UniProtKB-KW"/>
</dbReference>
<dbReference type="GO" id="GO:0046110">
    <property type="term" value="P:xanthine metabolic process"/>
    <property type="evidence" value="ECO:0007669"/>
    <property type="project" value="InterPro"/>
</dbReference>
<dbReference type="GO" id="GO:0032265">
    <property type="term" value="P:XMP salvage"/>
    <property type="evidence" value="ECO:0007669"/>
    <property type="project" value="UniProtKB-UniRule"/>
</dbReference>
<dbReference type="CDD" id="cd06223">
    <property type="entry name" value="PRTases_typeI"/>
    <property type="match status" value="1"/>
</dbReference>
<dbReference type="Gene3D" id="3.40.50.2020">
    <property type="match status" value="1"/>
</dbReference>
<dbReference type="HAMAP" id="MF_01184">
    <property type="entry name" value="XPRTase"/>
    <property type="match status" value="1"/>
</dbReference>
<dbReference type="InterPro" id="IPR000836">
    <property type="entry name" value="PRibTrfase_dom"/>
</dbReference>
<dbReference type="InterPro" id="IPR029057">
    <property type="entry name" value="PRTase-like"/>
</dbReference>
<dbReference type="InterPro" id="IPR050118">
    <property type="entry name" value="Pur/Pyrimidine_PRTase"/>
</dbReference>
<dbReference type="InterPro" id="IPR010079">
    <property type="entry name" value="Xanthine_PRibTrfase"/>
</dbReference>
<dbReference type="NCBIfam" id="NF006671">
    <property type="entry name" value="PRK09219.1"/>
    <property type="match status" value="1"/>
</dbReference>
<dbReference type="NCBIfam" id="TIGR01744">
    <property type="entry name" value="XPRTase"/>
    <property type="match status" value="1"/>
</dbReference>
<dbReference type="PANTHER" id="PTHR43864">
    <property type="entry name" value="HYPOXANTHINE/GUANINE PHOSPHORIBOSYLTRANSFERASE"/>
    <property type="match status" value="1"/>
</dbReference>
<dbReference type="PANTHER" id="PTHR43864:SF1">
    <property type="entry name" value="XANTHINE PHOSPHORIBOSYLTRANSFERASE"/>
    <property type="match status" value="1"/>
</dbReference>
<dbReference type="Pfam" id="PF00156">
    <property type="entry name" value="Pribosyltran"/>
    <property type="match status" value="1"/>
</dbReference>
<dbReference type="SUPFAM" id="SSF53271">
    <property type="entry name" value="PRTase-like"/>
    <property type="match status" value="1"/>
</dbReference>
<protein>
    <recommendedName>
        <fullName evidence="1">Xanthine phosphoribosyltransferase</fullName>
        <shortName evidence="1">XPRTase</shortName>
        <ecNumber evidence="1">2.4.2.22</ecNumber>
    </recommendedName>
</protein>
<evidence type="ECO:0000255" key="1">
    <source>
        <dbReference type="HAMAP-Rule" id="MF_01184"/>
    </source>
</evidence>
<sequence>MKVLQEKILNEGKVLSGDVLKVDAFLNHQIDPVLMQEIGKEFAKRFKEENITKIVTIESSGIAPAVMAALELGVKVIFARKRKSLTLQDNMYVANVYSFTKQETNEISLSRNHIDESDRVLIIDDFLANGQAALGLMSLVEQAGASIAGIGIVIEKAFQDGGKKLREQGIRVESLAEIASLDNNAVTFVQQETAEVK</sequence>
<reference key="1">
    <citation type="journal article" date="2003" name="Nature">
        <title>The genome sequence of Bacillus anthracis Ames and comparison to closely related bacteria.</title>
        <authorList>
            <person name="Read T.D."/>
            <person name="Peterson S.N."/>
            <person name="Tourasse N.J."/>
            <person name="Baillie L.W."/>
            <person name="Paulsen I.T."/>
            <person name="Nelson K.E."/>
            <person name="Tettelin H."/>
            <person name="Fouts D.E."/>
            <person name="Eisen J.A."/>
            <person name="Gill S.R."/>
            <person name="Holtzapple E.K."/>
            <person name="Okstad O.A."/>
            <person name="Helgason E."/>
            <person name="Rilstone J."/>
            <person name="Wu M."/>
            <person name="Kolonay J.F."/>
            <person name="Beanan M.J."/>
            <person name="Dodson R.J."/>
            <person name="Brinkac L.M."/>
            <person name="Gwinn M.L."/>
            <person name="DeBoy R.T."/>
            <person name="Madpu R."/>
            <person name="Daugherty S.C."/>
            <person name="Durkin A.S."/>
            <person name="Haft D.H."/>
            <person name="Nelson W.C."/>
            <person name="Peterson J.D."/>
            <person name="Pop M."/>
            <person name="Khouri H.M."/>
            <person name="Radune D."/>
            <person name="Benton J.L."/>
            <person name="Mahamoud Y."/>
            <person name="Jiang L."/>
            <person name="Hance I.R."/>
            <person name="Weidman J.F."/>
            <person name="Berry K.J."/>
            <person name="Plaut R.D."/>
            <person name="Wolf A.M."/>
            <person name="Watkins K.L."/>
            <person name="Nierman W.C."/>
            <person name="Hazen A."/>
            <person name="Cline R.T."/>
            <person name="Redmond C."/>
            <person name="Thwaite J.E."/>
            <person name="White O."/>
            <person name="Salzberg S.L."/>
            <person name="Thomason B."/>
            <person name="Friedlander A.M."/>
            <person name="Koehler T.M."/>
            <person name="Hanna P.C."/>
            <person name="Kolstoe A.-B."/>
            <person name="Fraser C.M."/>
        </authorList>
    </citation>
    <scope>NUCLEOTIDE SEQUENCE [LARGE SCALE GENOMIC DNA]</scope>
    <source>
        <strain>Ames / isolate Porton</strain>
    </source>
</reference>
<reference key="2">
    <citation type="submission" date="2004-01" db="EMBL/GenBank/DDBJ databases">
        <title>Complete genome sequence of Bacillus anthracis Sterne.</title>
        <authorList>
            <person name="Brettin T.S."/>
            <person name="Bruce D."/>
            <person name="Challacombe J.F."/>
            <person name="Gilna P."/>
            <person name="Han C."/>
            <person name="Hill K."/>
            <person name="Hitchcock P."/>
            <person name="Jackson P."/>
            <person name="Keim P."/>
            <person name="Longmire J."/>
            <person name="Lucas S."/>
            <person name="Okinaka R."/>
            <person name="Richardson P."/>
            <person name="Rubin E."/>
            <person name="Tice H."/>
        </authorList>
    </citation>
    <scope>NUCLEOTIDE SEQUENCE [LARGE SCALE GENOMIC DNA]</scope>
    <source>
        <strain>Sterne</strain>
    </source>
</reference>
<reference key="3">
    <citation type="journal article" date="2009" name="J. Bacteriol.">
        <title>The complete genome sequence of Bacillus anthracis Ames 'Ancestor'.</title>
        <authorList>
            <person name="Ravel J."/>
            <person name="Jiang L."/>
            <person name="Stanley S.T."/>
            <person name="Wilson M.R."/>
            <person name="Decker R.S."/>
            <person name="Read T.D."/>
            <person name="Worsham P."/>
            <person name="Keim P.S."/>
            <person name="Salzberg S.L."/>
            <person name="Fraser-Liggett C.M."/>
            <person name="Rasko D.A."/>
        </authorList>
    </citation>
    <scope>NUCLEOTIDE SEQUENCE [LARGE SCALE GENOMIC DNA]</scope>
    <source>
        <strain>Ames ancestor</strain>
    </source>
</reference>
<proteinExistence type="inferred from homology"/>
<feature type="chain" id="PRO_0000339659" description="Xanthine phosphoribosyltransferase">
    <location>
        <begin position="1"/>
        <end position="197"/>
    </location>
</feature>
<feature type="binding site" evidence="1">
    <location>
        <position position="20"/>
    </location>
    <ligand>
        <name>xanthine</name>
        <dbReference type="ChEBI" id="CHEBI:17712"/>
    </ligand>
</feature>
<feature type="binding site" evidence="1">
    <location>
        <position position="27"/>
    </location>
    <ligand>
        <name>xanthine</name>
        <dbReference type="ChEBI" id="CHEBI:17712"/>
    </ligand>
</feature>
<feature type="binding site" evidence="1">
    <location>
        <begin position="128"/>
        <end position="132"/>
    </location>
    <ligand>
        <name>5-phospho-alpha-D-ribose 1-diphosphate</name>
        <dbReference type="ChEBI" id="CHEBI:58017"/>
    </ligand>
</feature>
<feature type="binding site" evidence="1">
    <location>
        <position position="156"/>
    </location>
    <ligand>
        <name>xanthine</name>
        <dbReference type="ChEBI" id="CHEBI:17712"/>
    </ligand>
</feature>
<gene>
    <name evidence="1" type="primary">xpt</name>
    <name type="ordered locus">BA_1591</name>
    <name type="ordered locus">GBAA_1591</name>
    <name type="ordered locus">BAS1475</name>
</gene>